<proteinExistence type="inferred from homology"/>
<comment type="subcellular location">
    <subcellularLocation>
        <location evidence="2">Membrane</location>
        <topology evidence="2">Multi-pass membrane protein</topology>
    </subcellularLocation>
</comment>
<comment type="similarity">
    <text evidence="2">Belongs to the UPF0479 family.</text>
</comment>
<evidence type="ECO:0000255" key="1"/>
<evidence type="ECO:0000305" key="2"/>
<organism>
    <name type="scientific">Saccharomyces cerevisiae (strain ATCC 204508 / S288c)</name>
    <name type="common">Baker's yeast</name>
    <dbReference type="NCBI Taxonomy" id="559292"/>
    <lineage>
        <taxon>Eukaryota</taxon>
        <taxon>Fungi</taxon>
        <taxon>Dikarya</taxon>
        <taxon>Ascomycota</taxon>
        <taxon>Saccharomycotina</taxon>
        <taxon>Saccharomycetes</taxon>
        <taxon>Saccharomycetales</taxon>
        <taxon>Saccharomycetaceae</taxon>
        <taxon>Saccharomyces</taxon>
    </lineage>
</organism>
<accession>P0CX95</accession>
<accession>D3DMA0</accession>
<accession>Q8TFA4</accession>
<sequence>MMPAKLQLDVLRTLQSSARHGTQTLKNSNFLERFHKDRIVFCLPFFPALFFVPVQKVLQHLCLRFTQVAPYFIIQLFDLPSRHAENLAPLLASCRIQYTNCFSSSSNGQVPSIISLYLRVDLSPFYAKIFQISYRVPMIWLDVFQVFFVFLVISQHSLHS</sequence>
<reference key="1">
    <citation type="journal article" date="1997" name="Nature">
        <title>The nucleotide sequence of Saccharomyces cerevisiae chromosome V.</title>
        <authorList>
            <person name="Dietrich F.S."/>
            <person name="Mulligan J.T."/>
            <person name="Hennessy K.M."/>
            <person name="Yelton M.A."/>
            <person name="Allen E."/>
            <person name="Araujo R."/>
            <person name="Aviles E."/>
            <person name="Berno A."/>
            <person name="Brennan T."/>
            <person name="Carpenter J."/>
            <person name="Chen E."/>
            <person name="Cherry J.M."/>
            <person name="Chung E."/>
            <person name="Duncan M."/>
            <person name="Guzman E."/>
            <person name="Hartzell G."/>
            <person name="Hunicke-Smith S."/>
            <person name="Hyman R.W."/>
            <person name="Kayser A."/>
            <person name="Komp C."/>
            <person name="Lashkari D."/>
            <person name="Lew H."/>
            <person name="Lin D."/>
            <person name="Mosedale D."/>
            <person name="Nakahara K."/>
            <person name="Namath A."/>
            <person name="Norgren R."/>
            <person name="Oefner P."/>
            <person name="Oh C."/>
            <person name="Petel F.X."/>
            <person name="Roberts D."/>
            <person name="Sehl P."/>
            <person name="Schramm S."/>
            <person name="Shogren T."/>
            <person name="Smith V."/>
            <person name="Taylor P."/>
            <person name="Wei Y."/>
            <person name="Botstein D."/>
            <person name="Davis R.W."/>
        </authorList>
    </citation>
    <scope>NUCLEOTIDE SEQUENCE [LARGE SCALE GENOMIC DNA]</scope>
    <source>
        <strain>ATCC 204508 / S288c</strain>
    </source>
</reference>
<reference key="2">
    <citation type="journal article" date="2014" name="G3 (Bethesda)">
        <title>The reference genome sequence of Saccharomyces cerevisiae: Then and now.</title>
        <authorList>
            <person name="Engel S.R."/>
            <person name="Dietrich F.S."/>
            <person name="Fisk D.G."/>
            <person name="Binkley G."/>
            <person name="Balakrishnan R."/>
            <person name="Costanzo M.C."/>
            <person name="Dwight S.S."/>
            <person name="Hitz B.C."/>
            <person name="Karra K."/>
            <person name="Nash R.S."/>
            <person name="Weng S."/>
            <person name="Wong E.D."/>
            <person name="Lloyd P."/>
            <person name="Skrzypek M.S."/>
            <person name="Miyasato S.R."/>
            <person name="Simison M."/>
            <person name="Cherry J.M."/>
        </authorList>
    </citation>
    <scope>GENOME REANNOTATION</scope>
    <source>
        <strain>ATCC 204508 / S288c</strain>
    </source>
</reference>
<reference key="3">
    <citation type="journal article" date="2002" name="Nat. Biotechnol.">
        <title>An integrated approach for finding overlooked genes in yeast.</title>
        <authorList>
            <person name="Kumar A."/>
            <person name="Harrison P.M."/>
            <person name="Cheung K.-H."/>
            <person name="Lan N."/>
            <person name="Echols N."/>
            <person name="Bertone P."/>
            <person name="Miller P."/>
            <person name="Gerstein M.B."/>
            <person name="Snyder M."/>
        </authorList>
    </citation>
    <scope>NUCLEOTIDE SEQUENCE [GENOMIC DNA]</scope>
</reference>
<feature type="chain" id="PRO_0000410452" description="UPF0479 membrane protein YEL077W-A">
    <location>
        <begin position="1"/>
        <end position="160"/>
    </location>
</feature>
<feature type="transmembrane region" description="Helical" evidence="1">
    <location>
        <begin position="39"/>
        <end position="59"/>
    </location>
</feature>
<feature type="transmembrane region" description="Helical" evidence="1">
    <location>
        <begin position="136"/>
        <end position="156"/>
    </location>
</feature>
<gene>
    <name type="ordered locus">YEL077W-A</name>
</gene>
<dbReference type="EMBL" id="U73806">
    <property type="status" value="NOT_ANNOTATED_CDS"/>
    <property type="molecule type" value="Genomic_DNA"/>
</dbReference>
<dbReference type="EMBL" id="AF479991">
    <property type="protein sequence ID" value="AAL79304.1"/>
    <property type="molecule type" value="Genomic_DNA"/>
</dbReference>
<dbReference type="EMBL" id="BK006939">
    <property type="status" value="NOT_ANNOTATED_CDS"/>
    <property type="molecule type" value="Genomic_DNA"/>
</dbReference>
<dbReference type="RefSeq" id="NP_001073292.1">
    <property type="nucleotide sequence ID" value="NM_001184590.1"/>
</dbReference>
<dbReference type="FunCoup" id="P0CX95">
    <property type="interactions" value="3"/>
</dbReference>
<dbReference type="STRING" id="4932.YER190C-B"/>
<dbReference type="PaxDb" id="4932-YER190C-B"/>
<dbReference type="EnsemblFungi" id="YER190C-B_mRNA">
    <property type="protein sequence ID" value="YER190C-B"/>
    <property type="gene ID" value="YER190C-B"/>
</dbReference>
<dbReference type="EnsemblFungi" id="YGR296C-B_mRNA">
    <property type="protein sequence ID" value="YGR296C-B"/>
    <property type="gene ID" value="YGR296C-B"/>
</dbReference>
<dbReference type="EnsemblFungi" id="YPL283W-B_mRNA">
    <property type="protein sequence ID" value="YPL283W-B"/>
    <property type="gene ID" value="YPL283W-B"/>
</dbReference>
<dbReference type="EnsemblFungi" id="YPR204C-A_mRNA">
    <property type="protein sequence ID" value="YPR204C-A"/>
    <property type="gene ID" value="YPR204C-A"/>
</dbReference>
<dbReference type="KEGG" id="sce:YER190C-B"/>
<dbReference type="AGR" id="SGD:S000028621"/>
<dbReference type="SGD" id="S000028621">
    <property type="gene designation" value="YEL077W-A"/>
</dbReference>
<dbReference type="VEuPathDB" id="FungiDB:YER190C-B"/>
<dbReference type="HOGENOM" id="CLU_139933_0_0_1"/>
<dbReference type="InParanoid" id="P0CX95"/>
<dbReference type="PRO" id="PR:P0CX95"/>
<dbReference type="Proteomes" id="UP000002311">
    <property type="component" value="Chromosome V"/>
</dbReference>
<dbReference type="RNAct" id="P0CX95">
    <property type="molecule type" value="protein"/>
</dbReference>
<dbReference type="GO" id="GO:0016020">
    <property type="term" value="C:membrane"/>
    <property type="evidence" value="ECO:0007669"/>
    <property type="project" value="UniProtKB-SubCell"/>
</dbReference>
<protein>
    <recommendedName>
        <fullName>UPF0479 membrane protein YEL077W-A</fullName>
    </recommendedName>
</protein>
<name>YE07A_YEAST</name>
<keyword id="KW-0472">Membrane</keyword>
<keyword id="KW-1185">Reference proteome</keyword>
<keyword id="KW-0812">Transmembrane</keyword>
<keyword id="KW-1133">Transmembrane helix</keyword>